<name>RLME_POLNA</name>
<proteinExistence type="inferred from homology"/>
<sequence length="245" mass="26676">MKVNAKSDHKLLPKVTKVVAKGDAKGKKVNKAWLHDHINDPYVKQARKEGYRARAAFKLKEMDETLGLIKPGDCVVDLGSTPGAWSQYVRRKLSPTGAAVGALNGRIIGLDLLPMEPIEGVVFIQGDFREPEVLAKLEQALSTEKGPVKVDLVISDMAPNLSGIESADAARIAHLVELAVEFAQTRMKPDGALVVKLFHGSGYDDLVKLFQASFKVVKRMKPKASRPNSSETFLVGRGLKNVTPV</sequence>
<comment type="function">
    <text evidence="1">Specifically methylates the uridine in position 2552 of 23S rRNA at the 2'-O position of the ribose in the fully assembled 50S ribosomal subunit.</text>
</comment>
<comment type="catalytic activity">
    <reaction evidence="1">
        <text>uridine(2552) in 23S rRNA + S-adenosyl-L-methionine = 2'-O-methyluridine(2552) in 23S rRNA + S-adenosyl-L-homocysteine + H(+)</text>
        <dbReference type="Rhea" id="RHEA:42720"/>
        <dbReference type="Rhea" id="RHEA-COMP:10202"/>
        <dbReference type="Rhea" id="RHEA-COMP:10203"/>
        <dbReference type="ChEBI" id="CHEBI:15378"/>
        <dbReference type="ChEBI" id="CHEBI:57856"/>
        <dbReference type="ChEBI" id="CHEBI:59789"/>
        <dbReference type="ChEBI" id="CHEBI:65315"/>
        <dbReference type="ChEBI" id="CHEBI:74478"/>
        <dbReference type="EC" id="2.1.1.166"/>
    </reaction>
</comment>
<comment type="subcellular location">
    <subcellularLocation>
        <location evidence="1">Cytoplasm</location>
    </subcellularLocation>
</comment>
<comment type="similarity">
    <text evidence="1">Belongs to the class I-like SAM-binding methyltransferase superfamily. RNA methyltransferase RlmE family.</text>
</comment>
<organism>
    <name type="scientific">Polaromonas naphthalenivorans (strain CJ2)</name>
    <dbReference type="NCBI Taxonomy" id="365044"/>
    <lineage>
        <taxon>Bacteria</taxon>
        <taxon>Pseudomonadati</taxon>
        <taxon>Pseudomonadota</taxon>
        <taxon>Betaproteobacteria</taxon>
        <taxon>Burkholderiales</taxon>
        <taxon>Comamonadaceae</taxon>
        <taxon>Polaromonas</taxon>
    </lineage>
</organism>
<dbReference type="EC" id="2.1.1.166" evidence="1"/>
<dbReference type="EMBL" id="CP000529">
    <property type="protein sequence ID" value="ABM37914.1"/>
    <property type="molecule type" value="Genomic_DNA"/>
</dbReference>
<dbReference type="RefSeq" id="WP_011801991.1">
    <property type="nucleotide sequence ID" value="NC_008781.1"/>
</dbReference>
<dbReference type="SMR" id="A1VQI6"/>
<dbReference type="STRING" id="365044.Pnap_2612"/>
<dbReference type="KEGG" id="pna:Pnap_2612"/>
<dbReference type="eggNOG" id="COG0293">
    <property type="taxonomic scope" value="Bacteria"/>
</dbReference>
<dbReference type="HOGENOM" id="CLU_009422_4_1_4"/>
<dbReference type="Proteomes" id="UP000000644">
    <property type="component" value="Chromosome"/>
</dbReference>
<dbReference type="GO" id="GO:0005737">
    <property type="term" value="C:cytoplasm"/>
    <property type="evidence" value="ECO:0007669"/>
    <property type="project" value="UniProtKB-SubCell"/>
</dbReference>
<dbReference type="GO" id="GO:0008650">
    <property type="term" value="F:rRNA (uridine-2'-O-)-methyltransferase activity"/>
    <property type="evidence" value="ECO:0007669"/>
    <property type="project" value="UniProtKB-UniRule"/>
</dbReference>
<dbReference type="Gene3D" id="3.40.50.150">
    <property type="entry name" value="Vaccinia Virus protein VP39"/>
    <property type="match status" value="1"/>
</dbReference>
<dbReference type="HAMAP" id="MF_01547">
    <property type="entry name" value="RNA_methyltr_E"/>
    <property type="match status" value="1"/>
</dbReference>
<dbReference type="InterPro" id="IPR050082">
    <property type="entry name" value="RNA_methyltr_RlmE"/>
</dbReference>
<dbReference type="InterPro" id="IPR002877">
    <property type="entry name" value="RNA_MeTrfase_FtsJ_dom"/>
</dbReference>
<dbReference type="InterPro" id="IPR015507">
    <property type="entry name" value="rRNA-MeTfrase_E"/>
</dbReference>
<dbReference type="InterPro" id="IPR029063">
    <property type="entry name" value="SAM-dependent_MTases_sf"/>
</dbReference>
<dbReference type="PANTHER" id="PTHR10920">
    <property type="entry name" value="RIBOSOMAL RNA METHYLTRANSFERASE"/>
    <property type="match status" value="1"/>
</dbReference>
<dbReference type="PANTHER" id="PTHR10920:SF18">
    <property type="entry name" value="RRNA METHYLTRANSFERASE 2, MITOCHONDRIAL"/>
    <property type="match status" value="1"/>
</dbReference>
<dbReference type="Pfam" id="PF01728">
    <property type="entry name" value="FtsJ"/>
    <property type="match status" value="1"/>
</dbReference>
<dbReference type="PIRSF" id="PIRSF005461">
    <property type="entry name" value="23S_rRNA_mtase"/>
    <property type="match status" value="1"/>
</dbReference>
<dbReference type="SUPFAM" id="SSF53335">
    <property type="entry name" value="S-adenosyl-L-methionine-dependent methyltransferases"/>
    <property type="match status" value="1"/>
</dbReference>
<accession>A1VQI6</accession>
<evidence type="ECO:0000255" key="1">
    <source>
        <dbReference type="HAMAP-Rule" id="MF_01547"/>
    </source>
</evidence>
<reference key="1">
    <citation type="journal article" date="2009" name="Environ. Microbiol.">
        <title>The genome of Polaromonas naphthalenivorans strain CJ2, isolated from coal tar-contaminated sediment, reveals physiological and metabolic versatility and evolution through extensive horizontal gene transfer.</title>
        <authorList>
            <person name="Yagi J.M."/>
            <person name="Sims D."/>
            <person name="Brettin T."/>
            <person name="Bruce D."/>
            <person name="Madsen E.L."/>
        </authorList>
    </citation>
    <scope>NUCLEOTIDE SEQUENCE [LARGE SCALE GENOMIC DNA]</scope>
    <source>
        <strain>CJ2</strain>
    </source>
</reference>
<feature type="chain" id="PRO_0000282771" description="Ribosomal RNA large subunit methyltransferase E">
    <location>
        <begin position="1"/>
        <end position="245"/>
    </location>
</feature>
<feature type="active site" description="Proton acceptor" evidence="1">
    <location>
        <position position="196"/>
    </location>
</feature>
<feature type="binding site" evidence="1">
    <location>
        <position position="83"/>
    </location>
    <ligand>
        <name>S-adenosyl-L-methionine</name>
        <dbReference type="ChEBI" id="CHEBI:59789"/>
    </ligand>
</feature>
<feature type="binding site" evidence="1">
    <location>
        <position position="85"/>
    </location>
    <ligand>
        <name>S-adenosyl-L-methionine</name>
        <dbReference type="ChEBI" id="CHEBI:59789"/>
    </ligand>
</feature>
<feature type="binding site" evidence="1">
    <location>
        <position position="111"/>
    </location>
    <ligand>
        <name>S-adenosyl-L-methionine</name>
        <dbReference type="ChEBI" id="CHEBI:59789"/>
    </ligand>
</feature>
<feature type="binding site" evidence="1">
    <location>
        <position position="127"/>
    </location>
    <ligand>
        <name>S-adenosyl-L-methionine</name>
        <dbReference type="ChEBI" id="CHEBI:59789"/>
    </ligand>
</feature>
<feature type="binding site" evidence="1">
    <location>
        <position position="156"/>
    </location>
    <ligand>
        <name>S-adenosyl-L-methionine</name>
        <dbReference type="ChEBI" id="CHEBI:59789"/>
    </ligand>
</feature>
<gene>
    <name evidence="1" type="primary">rlmE</name>
    <name evidence="1" type="synonym">ftsJ</name>
    <name evidence="1" type="synonym">rrmJ</name>
    <name type="ordered locus">Pnap_2612</name>
</gene>
<protein>
    <recommendedName>
        <fullName evidence="1">Ribosomal RNA large subunit methyltransferase E</fullName>
        <ecNumber evidence="1">2.1.1.166</ecNumber>
    </recommendedName>
    <alternativeName>
        <fullName evidence="1">23S rRNA Um2552 methyltransferase</fullName>
    </alternativeName>
    <alternativeName>
        <fullName evidence="1">rRNA (uridine-2'-O-)-methyltransferase</fullName>
    </alternativeName>
</protein>
<keyword id="KW-0963">Cytoplasm</keyword>
<keyword id="KW-0489">Methyltransferase</keyword>
<keyword id="KW-1185">Reference proteome</keyword>
<keyword id="KW-0698">rRNA processing</keyword>
<keyword id="KW-0949">S-adenosyl-L-methionine</keyword>
<keyword id="KW-0808">Transferase</keyword>